<dbReference type="EC" id="2.4.1.15" evidence="2"/>
<dbReference type="EC" id="2.4.1.347" evidence="2"/>
<dbReference type="EMBL" id="U15187">
    <property type="protein sequence ID" value="AAA63137.1"/>
    <property type="molecule type" value="Genomic_DNA"/>
</dbReference>
<dbReference type="EMBL" id="AL583924">
    <property type="protein sequence ID" value="CAC31210.1"/>
    <property type="molecule type" value="Genomic_DNA"/>
</dbReference>
<dbReference type="PIR" id="B87191">
    <property type="entry name" value="B87191"/>
</dbReference>
<dbReference type="RefSeq" id="NP_302467.1">
    <property type="nucleotide sequence ID" value="NC_002677.1"/>
</dbReference>
<dbReference type="RefSeq" id="WP_010908787.1">
    <property type="nucleotide sequence ID" value="NC_002677.1"/>
</dbReference>
<dbReference type="SMR" id="Q50167"/>
<dbReference type="STRING" id="272631.gene:17576113"/>
<dbReference type="CAZy" id="GT20">
    <property type="family name" value="Glycosyltransferase Family 20"/>
</dbReference>
<dbReference type="KEGG" id="mle:ML2254"/>
<dbReference type="PATRIC" id="fig|272631.5.peg.4306"/>
<dbReference type="Leproma" id="ML2254"/>
<dbReference type="eggNOG" id="COG0380">
    <property type="taxonomic scope" value="Bacteria"/>
</dbReference>
<dbReference type="HOGENOM" id="CLU_002351_7_1_11"/>
<dbReference type="OrthoDB" id="9761633at2"/>
<dbReference type="UniPathway" id="UPA00299"/>
<dbReference type="Proteomes" id="UP000000806">
    <property type="component" value="Chromosome"/>
</dbReference>
<dbReference type="GO" id="GO:0005829">
    <property type="term" value="C:cytosol"/>
    <property type="evidence" value="ECO:0007669"/>
    <property type="project" value="TreeGrafter"/>
</dbReference>
<dbReference type="GO" id="GO:0047260">
    <property type="term" value="F:alpha,alpha-trehalose-phosphate synthase (GDP-forming) activity"/>
    <property type="evidence" value="ECO:0007669"/>
    <property type="project" value="RHEA"/>
</dbReference>
<dbReference type="GO" id="GO:0003825">
    <property type="term" value="F:alpha,alpha-trehalose-phosphate synthase (UDP-forming) activity"/>
    <property type="evidence" value="ECO:0007669"/>
    <property type="project" value="UniProtKB-EC"/>
</dbReference>
<dbReference type="GO" id="GO:0004805">
    <property type="term" value="F:trehalose-phosphatase activity"/>
    <property type="evidence" value="ECO:0007669"/>
    <property type="project" value="TreeGrafter"/>
</dbReference>
<dbReference type="GO" id="GO:0005992">
    <property type="term" value="P:trehalose biosynthetic process"/>
    <property type="evidence" value="ECO:0007669"/>
    <property type="project" value="UniProtKB-UniPathway"/>
</dbReference>
<dbReference type="CDD" id="cd03788">
    <property type="entry name" value="GT20_TPS"/>
    <property type="match status" value="1"/>
</dbReference>
<dbReference type="FunFam" id="3.40.50.2000:FF:000102">
    <property type="entry name" value="Trehalose-6-phosphate synthase"/>
    <property type="match status" value="1"/>
</dbReference>
<dbReference type="Gene3D" id="3.40.50.2000">
    <property type="entry name" value="Glycogen Phosphorylase B"/>
    <property type="match status" value="2"/>
</dbReference>
<dbReference type="InterPro" id="IPR001830">
    <property type="entry name" value="Glyco_trans_20"/>
</dbReference>
<dbReference type="PANTHER" id="PTHR10788:SF106">
    <property type="entry name" value="BCDNA.GH08860"/>
    <property type="match status" value="1"/>
</dbReference>
<dbReference type="PANTHER" id="PTHR10788">
    <property type="entry name" value="TREHALOSE-6-PHOSPHATE SYNTHASE"/>
    <property type="match status" value="1"/>
</dbReference>
<dbReference type="Pfam" id="PF00982">
    <property type="entry name" value="Glyco_transf_20"/>
    <property type="match status" value="1"/>
</dbReference>
<dbReference type="SUPFAM" id="SSF53756">
    <property type="entry name" value="UDP-Glycosyltransferase/glycogen phosphorylase"/>
    <property type="match status" value="1"/>
</dbReference>
<feature type="chain" id="PRO_0000348907" description="Trehalose-6-phosphate synthase">
    <location>
        <begin position="1"/>
        <end position="498"/>
    </location>
</feature>
<feature type="binding site" evidence="1">
    <location>
        <position position="28"/>
    </location>
    <ligand>
        <name>D-glucose 6-phosphate</name>
        <dbReference type="ChEBI" id="CHEBI:61548"/>
    </ligand>
</feature>
<feature type="binding site" evidence="1">
    <location>
        <begin position="48"/>
        <end position="49"/>
    </location>
    <ligand>
        <name>UDP-alpha-D-glucose</name>
        <dbReference type="ChEBI" id="CHEBI:58885"/>
    </ligand>
</feature>
<feature type="binding site" evidence="1">
    <location>
        <position position="106"/>
    </location>
    <ligand>
        <name>D-glucose 6-phosphate</name>
        <dbReference type="ChEBI" id="CHEBI:61548"/>
    </ligand>
</feature>
<feature type="binding site" evidence="1">
    <location>
        <position position="160"/>
    </location>
    <ligand>
        <name>D-glucose 6-phosphate</name>
        <dbReference type="ChEBI" id="CHEBI:61548"/>
    </ligand>
</feature>
<feature type="binding site" evidence="1">
    <location>
        <position position="302"/>
    </location>
    <ligand>
        <name>UDP-alpha-D-glucose</name>
        <dbReference type="ChEBI" id="CHEBI:58885"/>
    </ligand>
</feature>
<feature type="binding site" evidence="1">
    <location>
        <position position="307"/>
    </location>
    <ligand>
        <name>UDP-alpha-D-glucose</name>
        <dbReference type="ChEBI" id="CHEBI:58885"/>
    </ligand>
</feature>
<feature type="binding site" evidence="1">
    <location>
        <position position="340"/>
    </location>
    <ligand>
        <name>D-glucose 6-phosphate</name>
        <dbReference type="ChEBI" id="CHEBI:61548"/>
    </ligand>
</feature>
<feature type="binding site" evidence="1">
    <location>
        <begin position="405"/>
        <end position="409"/>
    </location>
    <ligand>
        <name>UDP-alpha-D-glucose</name>
        <dbReference type="ChEBI" id="CHEBI:58885"/>
    </ligand>
</feature>
<feature type="site" description="Involved in alpha anomer selectivity" evidence="1">
    <location>
        <position position="115"/>
    </location>
</feature>
<feature type="site" description="Involved in alpha anomer selectivity" evidence="1">
    <location>
        <position position="185"/>
    </location>
</feature>
<proteinExistence type="inferred from homology"/>
<comment type="function">
    <text evidence="2">Probably involved in the osmoprotection via the biosynthesis of trehalose and in the production of glycogen and alpha-glucan via the TreS-Pep2 branch involved in the biosynthesis of maltose-1-phosphate (M1P). Catalyzes the transfer of glucose from UDP-glucose (UDP-Glc) to D-glucose 6-phosphate (Glc-6-P) to form trehalose-6-phosphate. Probably also able to use ADP-Glc, CDP-Glc, GDP-Glc and TDP-Glc as glucosyl donors.</text>
</comment>
<comment type="catalytic activity">
    <reaction evidence="2">
        <text>ADP-alpha-D-glucose + D-glucose 6-phosphate = alpha,alpha-trehalose 6-phosphate + ADP + H(+)</text>
        <dbReference type="Rhea" id="RHEA:53880"/>
        <dbReference type="ChEBI" id="CHEBI:15378"/>
        <dbReference type="ChEBI" id="CHEBI:57498"/>
        <dbReference type="ChEBI" id="CHEBI:58429"/>
        <dbReference type="ChEBI" id="CHEBI:61548"/>
        <dbReference type="ChEBI" id="CHEBI:456216"/>
        <dbReference type="EC" id="2.4.1.347"/>
    </reaction>
</comment>
<comment type="catalytic activity">
    <reaction evidence="2">
        <text>CDP-alpha-D-glucose + D-glucose 6-phosphate = alpha,alpha-trehalose 6-phosphate + CDP + H(+)</text>
        <dbReference type="Rhea" id="RHEA:53884"/>
        <dbReference type="ChEBI" id="CHEBI:15378"/>
        <dbReference type="ChEBI" id="CHEBI:58069"/>
        <dbReference type="ChEBI" id="CHEBI:58429"/>
        <dbReference type="ChEBI" id="CHEBI:61548"/>
        <dbReference type="ChEBI" id="CHEBI:137927"/>
    </reaction>
</comment>
<comment type="catalytic activity">
    <reaction evidence="2">
        <text>GDP-alpha-D-glucose + D-glucose 6-phosphate = alpha,alpha-trehalose 6-phosphate + GDP + H(+)</text>
        <dbReference type="Rhea" id="RHEA:14605"/>
        <dbReference type="ChEBI" id="CHEBI:15378"/>
        <dbReference type="ChEBI" id="CHEBI:58189"/>
        <dbReference type="ChEBI" id="CHEBI:58429"/>
        <dbReference type="ChEBI" id="CHEBI:61548"/>
        <dbReference type="ChEBI" id="CHEBI:62230"/>
    </reaction>
</comment>
<comment type="catalytic activity">
    <reaction evidence="2">
        <text>TDP-alpha-D-glucose + D-glucose 6-phosphate = 5-methyl-UDP + alpha,alpha-trehalose 6-phosphate + H(+)</text>
        <dbReference type="Rhea" id="RHEA:53888"/>
        <dbReference type="ChEBI" id="CHEBI:15378"/>
        <dbReference type="ChEBI" id="CHEBI:58429"/>
        <dbReference type="ChEBI" id="CHEBI:61417"/>
        <dbReference type="ChEBI" id="CHEBI:61548"/>
        <dbReference type="ChEBI" id="CHEBI:137931"/>
    </reaction>
</comment>
<comment type="catalytic activity">
    <reaction evidence="2">
        <text>D-glucose 6-phosphate + UDP-alpha-D-glucose = alpha,alpha-trehalose 6-phosphate + UDP + H(+)</text>
        <dbReference type="Rhea" id="RHEA:18889"/>
        <dbReference type="ChEBI" id="CHEBI:15378"/>
        <dbReference type="ChEBI" id="CHEBI:58223"/>
        <dbReference type="ChEBI" id="CHEBI:58429"/>
        <dbReference type="ChEBI" id="CHEBI:58885"/>
        <dbReference type="ChEBI" id="CHEBI:61548"/>
        <dbReference type="EC" id="2.4.1.15"/>
    </reaction>
</comment>
<comment type="pathway">
    <text evidence="2">Glycan biosynthesis; trehalose biosynthesis.</text>
</comment>
<comment type="subunit">
    <text evidence="2">Homotetramer.</text>
</comment>
<comment type="similarity">
    <text evidence="2">Belongs to the glycosyltransferase 20 family.</text>
</comment>
<accession>Q50167</accession>
<sequence length="498" mass="56300">MTSRGNHGSKTSSDKHLGDSDFVVVANRLPVDQVRLPDGTAIWKRSPGGLVTALEPLLRQRRGAWVGWPGVINDNVDLDLTIKSIVQDGLTLYPVRLNTHDVAEYYEGFSNATLWPLYHDVIVKPIYHCEWWERYVDVNRRFAETTSRTAAYGGTVWVQDYQLQLVPKMLRIMRPDLTIGFFLHIPFPPVELFMQIPWRTEIIEGLLGADLVGFHLTSGAQNFLFLSRHLLGANTSRGLVGVRSRFGEVQLKSHTVQVGAFPISIDSKEIDQATRDRNVRRRAREIRAELGNPRKILLGVDRLDYTKGIDVRLRAFAELLAEGRAKRDDTVLVQLATPSRERVESYKILRNDIERQVGHINGEYGEVGHPVVHYLHRPIPRDELIAFYVASDVMLVTPLRDGMNLVAKEYVACRNDLGGALVLSEFTGAAAELRQAYLVNPHDLEGVKDTIEAALNQLAEEARRRMRSLRRQVLAHDVDRWARSFLDALAEAPARDAT</sequence>
<evidence type="ECO:0000250" key="1">
    <source>
        <dbReference type="UniProtKB" id="P31677"/>
    </source>
</evidence>
<evidence type="ECO:0000250" key="2">
    <source>
        <dbReference type="UniProtKB" id="P9WN11"/>
    </source>
</evidence>
<gene>
    <name evidence="2" type="primary">otsA</name>
    <name type="ordered locus">ML2254</name>
</gene>
<protein>
    <recommendedName>
        <fullName evidence="2">Trehalose-6-phosphate synthase</fullName>
        <shortName evidence="2">TPS</shortName>
        <ecNumber evidence="2">2.4.1.15</ecNumber>
        <ecNumber evidence="2">2.4.1.347</ecNumber>
    </recommendedName>
    <alternativeName>
        <fullName evidence="2">Alpha,alpha-trehalose-phosphate synthase [UDP-forming]</fullName>
    </alternativeName>
    <alternativeName>
        <fullName evidence="1">Osmoregulatory trehalose synthesis protein A</fullName>
        <shortName evidence="1">OtsA</shortName>
    </alternativeName>
</protein>
<keyword id="KW-0328">Glycosyltransferase</keyword>
<keyword id="KW-1185">Reference proteome</keyword>
<keyword id="KW-0808">Transferase</keyword>
<organism>
    <name type="scientific">Mycobacterium leprae (strain TN)</name>
    <dbReference type="NCBI Taxonomy" id="272631"/>
    <lineage>
        <taxon>Bacteria</taxon>
        <taxon>Bacillati</taxon>
        <taxon>Actinomycetota</taxon>
        <taxon>Actinomycetes</taxon>
        <taxon>Mycobacteriales</taxon>
        <taxon>Mycobacteriaceae</taxon>
        <taxon>Mycobacterium</taxon>
    </lineage>
</organism>
<name>OTSA_MYCLE</name>
<reference key="1">
    <citation type="submission" date="1994-09" db="EMBL/GenBank/DDBJ databases">
        <authorList>
            <person name="Smith D.R."/>
            <person name="Robison K."/>
        </authorList>
    </citation>
    <scope>NUCLEOTIDE SEQUENCE [GENOMIC DNA]</scope>
</reference>
<reference key="2">
    <citation type="journal article" date="2001" name="Nature">
        <title>Massive gene decay in the leprosy bacillus.</title>
        <authorList>
            <person name="Cole S.T."/>
            <person name="Eiglmeier K."/>
            <person name="Parkhill J."/>
            <person name="James K.D."/>
            <person name="Thomson N.R."/>
            <person name="Wheeler P.R."/>
            <person name="Honore N."/>
            <person name="Garnier T."/>
            <person name="Churcher C.M."/>
            <person name="Harris D.E."/>
            <person name="Mungall K.L."/>
            <person name="Basham D."/>
            <person name="Brown D."/>
            <person name="Chillingworth T."/>
            <person name="Connor R."/>
            <person name="Davies R.M."/>
            <person name="Devlin K."/>
            <person name="Duthoy S."/>
            <person name="Feltwell T."/>
            <person name="Fraser A."/>
            <person name="Hamlin N."/>
            <person name="Holroyd S."/>
            <person name="Hornsby T."/>
            <person name="Jagels K."/>
            <person name="Lacroix C."/>
            <person name="Maclean J."/>
            <person name="Moule S."/>
            <person name="Murphy L.D."/>
            <person name="Oliver K."/>
            <person name="Quail M.A."/>
            <person name="Rajandream M.A."/>
            <person name="Rutherford K.M."/>
            <person name="Rutter S."/>
            <person name="Seeger K."/>
            <person name="Simon S."/>
            <person name="Simmonds M."/>
            <person name="Skelton J."/>
            <person name="Squares R."/>
            <person name="Squares S."/>
            <person name="Stevens K."/>
            <person name="Taylor K."/>
            <person name="Whitehead S."/>
            <person name="Woodward J.R."/>
            <person name="Barrell B.G."/>
        </authorList>
    </citation>
    <scope>NUCLEOTIDE SEQUENCE [LARGE SCALE GENOMIC DNA]</scope>
    <source>
        <strain>TN</strain>
    </source>
</reference>